<comment type="function">
    <text evidence="1">Integral component of basement membranes. Component of the glomerular basement membrane (GBM), responsible for the fixed negative electrostatic membrane charge, and which provides a barrier which is both size- and charge-selective. It serves as an attachment substrate for cells. Plays essential roles in vascularization. Critical for normal heart development and for regulating the vascular response to injury. Also required for avascular cartilage development (By similarity).</text>
</comment>
<comment type="function">
    <molecule>Endorepellin</molecule>
    <text evidence="1">Anti-angiogenic and anti-tumor peptide that inhibits endothelial cell migration, collagen-induced endothelial tube morphogenesis and blood vessel growth in the chorioallantoic membrane. Blocks endothelial cell adhesion to fibronectin and type I collagen. Anti-tumor agent in neovascularization. Interaction with its ligand, integrin alpha2/beta1, is required for the anti-angiogenic properties. Evokes a reduction in phosphorylation of receptor tyrosine kinases via alpha2/beta1 integrin-mediated activation of the tyrosine phosphatase, PTPN6 (By similarity).</text>
</comment>
<comment type="function">
    <molecule>LG3 peptide</molecule>
    <text evidence="1">Has anti-angiogenic properties that require binding of calcium ions for full activity.</text>
</comment>
<comment type="subunit">
    <text evidence="2 12 16">Has a strong tendency to aggregate in dimers or stellate structures. Interacts with other basement membrane components such as laminin, prolargin and collagen type IV. Interacts with COL13A1 (By similarity). Interacts with FGFBP1 (By similarity). Interacts with VWA1 (PubMed:16407285). Interacts (via C-terminus) with ECM1 (via C-terminus) (By similarity). Interacts with SVEP1 (PubMed:36792666).</text>
</comment>
<comment type="subcellular location">
    <subcellularLocation>
        <location>Secreted</location>
        <location>Extracellular space</location>
        <location>Extracellular matrix</location>
        <location>Basement membrane</location>
    </subcellularLocation>
    <subcellularLocation>
        <location evidence="2">Secreted</location>
    </subcellularLocation>
</comment>
<comment type="PTM">
    <text evidence="1">Proteolytic processing produces the C-terminal angiogenic peptide, endorepellin. This peptide can be further processed to produce the LG3 peptide (By similarity).</text>
</comment>
<comment type="PTM">
    <text evidence="2">O-glycosylated. Contains three heparan sulfate chains. Also contains chondroitin sulfate.</text>
</comment>
<comment type="disruption phenotype">
    <text evidence="11 13">About 40% of perlecan null mice die at 10.5 dpc, the rest die just after birth. Embryonic percelan-null mice exhibit cardiac abnormalities including mechanical instability in the early stages of development (10.5 dpc) with lower amounts of critical basement membrane components, collagen IV and lamanins. Basement membranes are absent in cardiomyocytes whereas adherens junctions formed and matured around 9.5 dpc. Mice also have skeletal dysplasia characterized by micromelia with broad and bowed long bones, narrow thorax and craniofacial abnormalities. Cartilage matrix contains reduced and disorganized collagen fibrils and glycosaminoglycans. In cartilage, proliferation of chondrocytes was reduced and the prehypertrophic zone was diminished.</text>
</comment>
<organism>
    <name type="scientific">Mus musculus</name>
    <name type="common">Mouse</name>
    <dbReference type="NCBI Taxonomy" id="10090"/>
    <lineage>
        <taxon>Eukaryota</taxon>
        <taxon>Metazoa</taxon>
        <taxon>Chordata</taxon>
        <taxon>Craniata</taxon>
        <taxon>Vertebrata</taxon>
        <taxon>Euteleostomi</taxon>
        <taxon>Mammalia</taxon>
        <taxon>Eutheria</taxon>
        <taxon>Euarchontoglires</taxon>
        <taxon>Glires</taxon>
        <taxon>Rodentia</taxon>
        <taxon>Myomorpha</taxon>
        <taxon>Muroidea</taxon>
        <taxon>Muridae</taxon>
        <taxon>Murinae</taxon>
        <taxon>Mus</taxon>
        <taxon>Mus</taxon>
    </lineage>
</organism>
<reference key="1">
    <citation type="journal article" date="1991" name="J. Biol. Chem.">
        <title>The complete sequence of perlecan, a basement membrane heparan sulfate proteoglycan, reveals extensive similarity with laminin A chain, low density lipoprotein-receptor, and the neural cell adhesion molecule.</title>
        <authorList>
            <person name="Noonan D.M."/>
            <person name="Fulle A."/>
            <person name="Valente P."/>
            <person name="Cai S."/>
            <person name="Horigan E."/>
            <person name="Sasaki M."/>
            <person name="Yamada Y."/>
            <person name="Hassell J.R."/>
        </authorList>
    </citation>
    <scope>NUCLEOTIDE SEQUENCE [MRNA]</scope>
    <source>
        <tissue>Melanoma</tissue>
    </source>
</reference>
<reference key="2">
    <citation type="journal article" date="1988" name="J. Biol. Chem.">
        <title>Identification of cDNA clones encoding different domains of the basement membrane heparan sulfate proteoglycan.</title>
        <authorList>
            <person name="Noonan D.M."/>
            <person name="Horigan E.A."/>
            <person name="Ledbetter S.R."/>
            <person name="Vogeli G."/>
            <person name="Sasaki M."/>
            <person name="Yamada Y."/>
            <person name="Hassell J.R."/>
        </authorList>
    </citation>
    <scope>NUCLEOTIDE SEQUENCE [MRNA] OF 940-1601 AND 1870-2600</scope>
    <scope>PARTIAL PROTEIN SEQUENCE</scope>
</reference>
<reference key="3">
    <citation type="journal article" date="1995" name="Eur. J. Biochem.">
        <title>Structural properties of recombinant domain III-3 of perlecan containing a globular domain inserted into an epidermal-growth-factor-like motif.</title>
        <authorList>
            <person name="Schulze B."/>
            <person name="Mann K."/>
            <person name="Battistutta R."/>
            <person name="Wiedemann H."/>
            <person name="Timpl R."/>
        </authorList>
    </citation>
    <scope>PARTIAL PROTEIN SEQUENCE</scope>
</reference>
<reference key="4">
    <citation type="journal article" date="1999" name="Nat. Genet.">
        <title>Perlecan is essential for cartilage and cephalic development.</title>
        <authorList>
            <person name="Arikawa-Hirasawa E."/>
            <person name="Watanabe H."/>
            <person name="Takami H."/>
            <person name="Hassell J.R."/>
            <person name="Yamada Y."/>
        </authorList>
    </citation>
    <scope>DISRUPTION PHENOTYPE</scope>
    <scope>FUNCTION</scope>
</reference>
<reference key="5">
    <citation type="journal article" date="2005" name="J. Biol. Chem.">
        <title>BMP-1/Tolloid-like metalloproteases process endorepellin, the angiostatic C-terminal fragment of perlecan.</title>
        <authorList>
            <person name="Gonzalez E.M."/>
            <person name="Reed C.C."/>
            <person name="Bix G."/>
            <person name="Fu J."/>
            <person name="Zhang Y."/>
            <person name="Gopalakrishnan B."/>
            <person name="Greenspan D.S."/>
            <person name="Iozzo R.V."/>
        </authorList>
    </citation>
    <scope>PROTEOLYTIC PROCESSING</scope>
</reference>
<reference key="6">
    <citation type="journal article" date="2006" name="J. Biol. Chem.">
        <title>WARP is a novel multimeric component of the chondrocyte pericellular matrix that interacts with perlecan.</title>
        <authorList>
            <person name="Allen J.M."/>
            <person name="Bateman J.F."/>
            <person name="Hansen U."/>
            <person name="Wilson R."/>
            <person name="Bruckner P."/>
            <person name="Owens R.T."/>
            <person name="Sasaki T."/>
            <person name="Timpl R."/>
            <person name="Fitzgerald J."/>
        </authorList>
    </citation>
    <scope>INTERACTION WITH VWA1</scope>
</reference>
<reference key="7">
    <citation type="journal article" date="2008" name="Cardiovasc. Res.">
        <title>Perlecan is critical for heart stability.</title>
        <authorList>
            <person name="Sasse P."/>
            <person name="Malan D."/>
            <person name="Fleischmann M."/>
            <person name="Roell W."/>
            <person name="Gustafsson E."/>
            <person name="Bostani T."/>
            <person name="Fan Y."/>
            <person name="Kolbe T."/>
            <person name="Breitbach M."/>
            <person name="Addicks K."/>
            <person name="Welz A."/>
            <person name="Brem G."/>
            <person name="Hescheler J."/>
            <person name="Aszodi A."/>
            <person name="Costell M."/>
            <person name="Bloch W."/>
            <person name="Fleischmann B.K."/>
        </authorList>
    </citation>
    <scope>DISRUPTION PHENOTYPE</scope>
    <scope>FUNCTION</scope>
</reference>
<reference key="8">
    <citation type="journal article" date="2009" name="Mol. Cell. Proteomics">
        <title>The mouse C2C12 myoblast cell surface N-linked glycoproteome: identification, glycosite occupancy, and membrane orientation.</title>
        <authorList>
            <person name="Gundry R.L."/>
            <person name="Raginski K."/>
            <person name="Tarasova Y."/>
            <person name="Tchernyshyov I."/>
            <person name="Bausch-Fluck D."/>
            <person name="Elliott S.T."/>
            <person name="Boheler K.R."/>
            <person name="Van Eyk J.E."/>
            <person name="Wollscheid B."/>
        </authorList>
    </citation>
    <scope>GLYCOSYLATION [LARGE SCALE ANALYSIS] AT ASN-89; ASN-2336; ASN-3098 AND ASN-3154</scope>
    <source>
        <tissue>Myoblast</tissue>
    </source>
</reference>
<reference key="9">
    <citation type="journal article" date="2009" name="Nat. Biotechnol.">
        <title>Mass-spectrometric identification and relative quantification of N-linked cell surface glycoproteins.</title>
        <authorList>
            <person name="Wollscheid B."/>
            <person name="Bausch-Fluck D."/>
            <person name="Henderson C."/>
            <person name="O'Brien R."/>
            <person name="Bibel M."/>
            <person name="Schiess R."/>
            <person name="Aebersold R."/>
            <person name="Watts J.D."/>
        </authorList>
    </citation>
    <scope>GLYCOSYLATION [LARGE SCALE ANALYSIS] AT ASN-2336 AND ASN-3098</scope>
</reference>
<reference key="10">
    <citation type="journal article" date="2010" name="Cell">
        <title>A tissue-specific atlas of mouse protein phosphorylation and expression.</title>
        <authorList>
            <person name="Huttlin E.L."/>
            <person name="Jedrychowski M.P."/>
            <person name="Elias J.E."/>
            <person name="Goswami T."/>
            <person name="Rad R."/>
            <person name="Beausoleil S.A."/>
            <person name="Villen J."/>
            <person name="Haas W."/>
            <person name="Sowa M.E."/>
            <person name="Gygi S.P."/>
        </authorList>
    </citation>
    <scope>IDENTIFICATION BY MASS SPECTROMETRY [LARGE SCALE ANALYSIS]</scope>
    <source>
        <tissue>Brown adipose tissue</tissue>
        <tissue>Heart</tissue>
        <tissue>Kidney</tissue>
        <tissue>Liver</tissue>
        <tissue>Lung</tissue>
        <tissue>Pancreas</tissue>
        <tissue>Spleen</tissue>
        <tissue>Testis</tissue>
    </source>
</reference>
<reference key="11">
    <citation type="journal article" date="2023" name="Nat. Commun.">
        <title>SVEP1 is an endogenous ligand for the orphan receptor PEAR1.</title>
        <authorList>
            <person name="Elenbaas J.S."/>
            <person name="Pudupakkam U."/>
            <person name="Ashworth K.J."/>
            <person name="Kang C.J."/>
            <person name="Patel V."/>
            <person name="Santana K."/>
            <person name="Jung I.H."/>
            <person name="Lee P.C."/>
            <person name="Burks K.H."/>
            <person name="Amrute J.M."/>
            <person name="Mecham R.P."/>
            <person name="Halabi C.M."/>
            <person name="Alisio A."/>
            <person name="Di Paola J."/>
            <person name="Stitziel N.O."/>
        </authorList>
    </citation>
    <scope>INTERACTION WITH SVEP1</scope>
</reference>
<reference key="12">
    <citation type="journal article" date="2001" name="Nat. Struct. Biol.">
        <title>Crystal structure and mutational analysis of a perlecan-binding fragment of nidogen-1.</title>
        <authorList>
            <person name="Hopf M."/>
            <person name="Gohring W."/>
            <person name="Ries A."/>
            <person name="Timpl R."/>
            <person name="Hohenester E."/>
        </authorList>
    </citation>
    <scope>X-RAY CRYSTALLOGRAPHY (2.0 ANGSTROMS) OF 1761-1858 IN COMPLEX WITH A NIDOGEN FRAGMENT</scope>
</reference>
<accession>Q05793</accession>
<keyword id="KW-0002">3D-structure</keyword>
<keyword id="KW-0037">Angiogenesis</keyword>
<keyword id="KW-0084">Basement membrane</keyword>
<keyword id="KW-0106">Calcium</keyword>
<keyword id="KW-0903">Direct protein sequencing</keyword>
<keyword id="KW-1015">Disulfide bond</keyword>
<keyword id="KW-0245">EGF-like domain</keyword>
<keyword id="KW-0272">Extracellular matrix</keyword>
<keyword id="KW-0325">Glycoprotein</keyword>
<keyword id="KW-0357">Heparan sulfate</keyword>
<keyword id="KW-0393">Immunoglobulin domain</keyword>
<keyword id="KW-0424">Laminin EGF-like domain</keyword>
<keyword id="KW-0479">Metal-binding</keyword>
<keyword id="KW-0654">Proteoglycan</keyword>
<keyword id="KW-1185">Reference proteome</keyword>
<keyword id="KW-0677">Repeat</keyword>
<keyword id="KW-0964">Secreted</keyword>
<keyword id="KW-0732">Signal</keyword>
<evidence type="ECO:0000250" key="1"/>
<evidence type="ECO:0000250" key="2">
    <source>
        <dbReference type="UniProtKB" id="P98160"/>
    </source>
</evidence>
<evidence type="ECO:0000255" key="3"/>
<evidence type="ECO:0000255" key="4">
    <source>
        <dbReference type="PROSITE-ProRule" id="PRU00076"/>
    </source>
</evidence>
<evidence type="ECO:0000255" key="5">
    <source>
        <dbReference type="PROSITE-ProRule" id="PRU00122"/>
    </source>
</evidence>
<evidence type="ECO:0000255" key="6">
    <source>
        <dbReference type="PROSITE-ProRule" id="PRU00124"/>
    </source>
</evidence>
<evidence type="ECO:0000255" key="7">
    <source>
        <dbReference type="PROSITE-ProRule" id="PRU00188"/>
    </source>
</evidence>
<evidence type="ECO:0000255" key="8">
    <source>
        <dbReference type="PROSITE-ProRule" id="PRU00458"/>
    </source>
</evidence>
<evidence type="ECO:0000255" key="9">
    <source>
        <dbReference type="PROSITE-ProRule" id="PRU00460"/>
    </source>
</evidence>
<evidence type="ECO:0000256" key="10">
    <source>
        <dbReference type="SAM" id="MobiDB-lite"/>
    </source>
</evidence>
<evidence type="ECO:0000269" key="11">
    <source>
    </source>
</evidence>
<evidence type="ECO:0000269" key="12">
    <source>
    </source>
</evidence>
<evidence type="ECO:0000269" key="13">
    <source>
    </source>
</evidence>
<evidence type="ECO:0000269" key="14">
    <source>
    </source>
</evidence>
<evidence type="ECO:0000269" key="15">
    <source>
    </source>
</evidence>
<evidence type="ECO:0000269" key="16">
    <source>
    </source>
</evidence>
<evidence type="ECO:0000305" key="17"/>
<evidence type="ECO:0007829" key="18">
    <source>
        <dbReference type="PDB" id="1GL4"/>
    </source>
</evidence>
<sequence length="3707" mass="398294">MGQRAVGSLLLGLLLHARLLAVTHGLRAYDGLSLPEDTETVTASRYGWTYSYLSDDEDLLADDASGDGLGSGDVGSGDFQMVYFRALVNFTRSIEYSPQLEDASAKEFREVSEAVVEKLEPEYRKIPGDQIVSVVFIKELDGWVFVELDVGSEGNADGSQIQEVLHTVVSSGSIGPYVTSPWGFKFRRLGTVPQFPRVCTETEFACHSYNECVALEYRCDRRPDCRDMSDELNCEEPVPELSSSTPAVGKVSPLPLWPEAATTPPPPVTHGPQFLLPSVPGPSACGPQEASCHSGHCIPRDYLCDGQEDCRDGSDELGCASPPPCEPNEFACENGHCALKLWRCDGDFDCEDRTDEANCSVKQPGEVCGPTHFQCVSTNRCIPASFHCDEESDCPDRSDEFGCMPPQVVTPPQQSIQASRGQTVTFTCVATGVPTPIINWRLNWGHIPAHPRVTMTSEGGRGTLIIRDVKEADQGAYTCEAMNSRGMVFGIPDGVLELVPQRGPCPDGHFYLEDSASCLPCFCFGVTNVCQSSLRFRDQIRLSFDQPNDFKGVNVTMPSQPGVPPLSSTQLQIDPALQEFQLVDLSRRFLVHDAFWALPKQFLGNKVDSYGGFLRYKVRYELARGMLEPVQKPDVILVGAGYRLHSRGHTPTHPGTLNQRQVQLSEEHWVHESGRPVQRAEMLQALASLEAVLLQTVYNTKMASVGLSDIVMDTTVTHTTIHGRAHSVEECRCPIGYSGLSCESCDAHFTRVPGGPYLGTCSGCNCNGHASSCDPVYGHCLNCQHNTEGPQCDKCKPGFFGDATKATATACRPCPCPYIDASRRFSDTCFLDTDGQATCDACAPGYTGRRCESCAPGYEGNPIQPGGKCRPTTQEIVRCDERGSLGTSGETCRCKNNVVGRLCNECSDGSFHLSKQNPDGCLKCFCMGVSRQCSSSSWSRAQVLGASEQPSQFSLSNAAGTHTTSEGVSSPAPGELSFSSFHNLLSEPYFWSLPASFRGDKVTSYGGELRFTVMQRPRPSSAPLHRQPLVVLQGNNIVLEHHASRDPSPGQPSNFIVPFQEQAWQRPDGQPATREHLLMALAGIDALLIQASYTQQPAESRLSGISMDVAVPENTGQDSAREVEQCTCPPGYRGPSCQDCDTGYTRVPSGLYLGTCERCNCHGHSETCEPETGACQSCQHHTEGASCEQCQPGYYGDAQRGTPQDCQPCPCYGAPAAGQAAHTCFLDTDGHPTCDSCSPGHSGRHCERCAPGYYGNPSQGQPCHRDGQVPEVLGCGCDPHGSISSQCDAAGQCQCKAQVEGRSCSHCRPHHFHLSASNPEGCLPCFCMGVTQQCASSSYSRQLISTHFAPGDFQGFALVNPQRNSQLTGGFTVEPVHDGARLSFSNFAHLGQESFYWQLPEIYQGDKVAAYGGKLRYTLSYTAGPQGSPLLDPDIQITGNNIMLVASQPALQGPERRSYEIIFREEFWRRPDGQPATREHLLMALADLDELLVRATFSSVPRAASISAVSLEGAQPGPSSGPRALEVEECRCPPGYVGLSCQDCAPGYTRTGSGLYLGQCELCECNGHSDLCHPETGACSRCQHNTAGEFCELCATGYYGDATAGTPEDCQPCACPLTNPENMFSRTCESLGAGGYRCTACEPGYTGQYCEQCAPGYEGDPNVQGGRCQPLTKESLEVQIHPSRSVVPQGGPHSLRCQVSGSPPHYFYWSREDGRPLPSSAQQRHQGSELHFPSVQPSDAGVYICTCRNLIHTSNSRAELLVAEAPSKPIMVTVEEQRSQSVRPGADVTFICTAKSKSPAYTLVWTRLHNGKLPSRAMDFNGILTIRNVQPSDAGTYVCTGSNMFAMDQGTATLHVQVSGTSTAPVASIHPPQLTVQPGQQAEFRCSATGNPTPMLEWIGGPSGQLPAKAQIHNGILRLPAIEPSDQGQYLCRALSSAGQHVARAMLQVHGGSGPRVQVSPERTQVHEGRTVRLYCRAAGVPSASITWRKEGGSLPFRHQAHGSRLRLHHMSVADSGEYVCRANNNIDAQETSIMISVSPSTNSPPAPASPAPIRIESSSSRVAEGQTLDLNCVVPGHAHAQVTWHKRGGSLPTHHQTHGSRLRLYQVSSADSGEYVCSVLSSSGPLEASVLVSITPAAANVHIPGVVPPIRIETSSSRVAEGQTLDLSCVVPGQAHAQVTWHKRGGSLPAGHQVHGHMLRLNRVSPADSGEYSCQVTGSSGTLEASVLVTIEASEPSPIPAPGLAQPVYIESSSSHLTEGQTVDLKCVVPGQAHAQVTWHKRGSSLPARHQTHGSLLRLYQLSPADSGEYVCQVAGSSHPEHEASFKLTVPSSQNSSFRLRSPVISIEPPSSTVQQGQDASFKCLIHEGAMPIKVEWKIRDQELEDNVHISPNGSIITIVAPGPATMEPTACVASNVYGMAQSVVNLSVHGPPTVSVLPEGPVHVKMGKDITLECISSGEPRSSPRWTRLGIPVKLEPRMFGLMNSHAMLKIASVKPSDAGTYVCQAQNALGTAQKQVELIVDTGTVAPGTPQVQVEESELTLEAGHTATLHCSATGNPPPTIHWSKLRAPLPWQHRIEGNTLVIPRVAQQDSGQYICNATNSAGHTEATVVLHVESPPYATIIPEHTSAQPGNLVQLQCLAHGTPPLTYQWSLVGGVLPEKAVVRNQLLRLEPTVPEDSGRYRCQVSNRVGSAEAFAQVLVQGSSSNLPDTSIPGGSTPTVQVTPQLETRNIGASVEFHCAVPNERGTHLRWLKEGGQLPPGHSVQDGVLRIQNLDQNCQGTYVCQAHGPWGQAQATAQLIVQALPSVLINVRTSVHSVVVGHSVEFECLALGDPKPQVTWSKVGGHLRPGIVQSGTIIRIAHVELADAGQYRCAATNAAGTTQSHVLLLVQALPQISTPPEIRVPAGSAAVFPCMASGYPTPAITWSKVDGDLPPDSRLENNMLMLPSVRPEDAGTYVCTATNRQGKVKAFAYLQVPERVIPYFTQTPYSFLPLPTIKDAYRKFEIKITFRPDSADGMLLYNGQKRSPTNLANRQPDFISFGLVGGRPEFRFDAGSGMATIRHPTPLALGQFHTVTLLRSLTQGSLIVGNLAPVNGTSQGKFQGLDLNEELYLGGYPDYGAIPKAGLSSGFVGCVRELRIQGEEIVFHDVNLTTHGISHCPTCQDRPCQNGGQCQDSESSSYTCVCPAGFTAAAVNIRKPCTATPSLWADATCVNRPDGRGYTCRCHLGRSGVRCEEGVTVTTPSMSGAGSYLALPALTNTHHELRLDVEFKPLEPNGILLFSGGKSGPVEDFVSLAMVGGHLEFRYELGSGLAVLRSHEPLALGRWHRVSAERLNKDGSLRVDGGRPVLRSSPGKSQGLNLHTLLYLGGVEPSVQLSPATNMSAHFHGCVGEVSVNGKRLDLTYSFLGSQGVGQCYDSSPCERQPCRNGATCMPAGEYEFQCLCQDGFKGDLCEHEENPCQLHEPCLNGGTCRGARCLCLPGFSGPRCQQGAGYGVVESDWHPEGSGGNDAPGQYGAYFYDNGFLGLPGNSFSRSLPEVPETIEFEVRTSTADGLLLWQGVVREASRSKDFISLGLQDGHLVFSYQLGSGEARLVSGDPINDGEWHRITALREGQRGSIQVDGEDLVTGRSPGPNVAVNTKDIIYIGGAPDVATLTRGKFSSGITGCIKNLVLHTARPGAPPPQPLDLQHRAQAGANTRPCPS</sequence>
<proteinExistence type="evidence at protein level"/>
<protein>
    <recommendedName>
        <fullName>Basement membrane-specific heparan sulfate proteoglycan core protein</fullName>
        <shortName>HSPG</shortName>
    </recommendedName>
    <component>
        <recommendedName>
            <fullName>Endorepellin</fullName>
        </recommendedName>
    </component>
    <component>
        <recommendedName>
            <fullName>LG3 peptide</fullName>
        </recommendedName>
    </component>
</protein>
<gene>
    <name type="primary">Hspg2</name>
</gene>
<dbReference type="EMBL" id="M77174">
    <property type="protein sequence ID" value="AAA39911.1"/>
    <property type="molecule type" value="mRNA"/>
</dbReference>
<dbReference type="EMBL" id="J04054">
    <property type="protein sequence ID" value="AAA39899.1"/>
    <property type="molecule type" value="mRNA"/>
</dbReference>
<dbReference type="EMBL" id="J04055">
    <property type="protein sequence ID" value="AAA39912.1"/>
    <property type="molecule type" value="mRNA"/>
</dbReference>
<dbReference type="PIR" id="S18252">
    <property type="entry name" value="S18252"/>
</dbReference>
<dbReference type="RefSeq" id="NP_032331.2">
    <property type="nucleotide sequence ID" value="NM_008305.3"/>
</dbReference>
<dbReference type="PDB" id="1GL4">
    <property type="method" value="X-ray"/>
    <property type="resolution" value="2.00 A"/>
    <property type="chains" value="B=1765-1858"/>
</dbReference>
<dbReference type="PDBsum" id="1GL4"/>
<dbReference type="SMR" id="Q05793"/>
<dbReference type="BioGRID" id="200461">
    <property type="interactions" value="18"/>
</dbReference>
<dbReference type="FunCoup" id="Q05793">
    <property type="interactions" value="367"/>
</dbReference>
<dbReference type="IntAct" id="Q05793">
    <property type="interactions" value="4"/>
</dbReference>
<dbReference type="MINT" id="Q05793"/>
<dbReference type="STRING" id="10090.ENSMUSP00000131316"/>
<dbReference type="GlyConnect" id="2146">
    <property type="glycosylation" value="2 N-Linked glycans (3 sites)"/>
</dbReference>
<dbReference type="GlyCosmos" id="Q05793">
    <property type="glycosylation" value="13 sites, 2 glycans"/>
</dbReference>
<dbReference type="GlyGen" id="Q05793">
    <property type="glycosylation" value="20 sites, 8 N-linked glycans (5 sites), 1 O-linked glycan (4 sites)"/>
</dbReference>
<dbReference type="iPTMnet" id="Q05793"/>
<dbReference type="PhosphoSitePlus" id="Q05793"/>
<dbReference type="SwissPalm" id="Q05793"/>
<dbReference type="jPOST" id="Q05793"/>
<dbReference type="PeptideAtlas" id="Q05793"/>
<dbReference type="ProteomicsDB" id="288180"/>
<dbReference type="Pumba" id="Q05793"/>
<dbReference type="GeneID" id="15530"/>
<dbReference type="KEGG" id="mmu:15530"/>
<dbReference type="AGR" id="MGI:96257"/>
<dbReference type="CTD" id="3339"/>
<dbReference type="MGI" id="MGI:96257">
    <property type="gene designation" value="Hspg2"/>
</dbReference>
<dbReference type="InParanoid" id="Q05793"/>
<dbReference type="OrthoDB" id="10055367at2759"/>
<dbReference type="BioGRID-ORCS" id="15530">
    <property type="hits" value="3 hits in 79 CRISPR screens"/>
</dbReference>
<dbReference type="ChiTaRS" id="Hspg2">
    <property type="organism name" value="mouse"/>
</dbReference>
<dbReference type="EvolutionaryTrace" id="Q05793"/>
<dbReference type="PRO" id="PR:Q05793"/>
<dbReference type="Proteomes" id="UP000000589">
    <property type="component" value="Unplaced"/>
</dbReference>
<dbReference type="RNAct" id="Q05793">
    <property type="molecule type" value="protein"/>
</dbReference>
<dbReference type="GO" id="GO:0005604">
    <property type="term" value="C:basement membrane"/>
    <property type="evidence" value="ECO:0000314"/>
    <property type="project" value="MGI"/>
</dbReference>
<dbReference type="GO" id="GO:0062023">
    <property type="term" value="C:collagen-containing extracellular matrix"/>
    <property type="evidence" value="ECO:0007005"/>
    <property type="project" value="UniProtKB"/>
</dbReference>
<dbReference type="GO" id="GO:0031012">
    <property type="term" value="C:extracellular matrix"/>
    <property type="evidence" value="ECO:0000314"/>
    <property type="project" value="MGI"/>
</dbReference>
<dbReference type="GO" id="GO:0005576">
    <property type="term" value="C:extracellular region"/>
    <property type="evidence" value="ECO:0000304"/>
    <property type="project" value="Reactome"/>
</dbReference>
<dbReference type="GO" id="GO:0005796">
    <property type="term" value="C:Golgi lumen"/>
    <property type="evidence" value="ECO:0000304"/>
    <property type="project" value="Reactome"/>
</dbReference>
<dbReference type="GO" id="GO:0005509">
    <property type="term" value="F:calcium ion binding"/>
    <property type="evidence" value="ECO:0007669"/>
    <property type="project" value="InterPro"/>
</dbReference>
<dbReference type="GO" id="GO:0002020">
    <property type="term" value="F:protease binding"/>
    <property type="evidence" value="ECO:0000353"/>
    <property type="project" value="BHF-UCL"/>
</dbReference>
<dbReference type="GO" id="GO:0001525">
    <property type="term" value="P:angiogenesis"/>
    <property type="evidence" value="ECO:0007669"/>
    <property type="project" value="UniProtKB-KW"/>
</dbReference>
<dbReference type="GO" id="GO:0007420">
    <property type="term" value="P:brain development"/>
    <property type="evidence" value="ECO:0000315"/>
    <property type="project" value="MGI"/>
</dbReference>
<dbReference type="GO" id="GO:0048738">
    <property type="term" value="P:cardiac muscle tissue development"/>
    <property type="evidence" value="ECO:0000315"/>
    <property type="project" value="MGI"/>
</dbReference>
<dbReference type="GO" id="GO:0060351">
    <property type="term" value="P:cartilage development involved in endochondral bone morphogenesis"/>
    <property type="evidence" value="ECO:0000315"/>
    <property type="project" value="MGI"/>
</dbReference>
<dbReference type="GO" id="GO:0002062">
    <property type="term" value="P:chondrocyte differentiation"/>
    <property type="evidence" value="ECO:0000315"/>
    <property type="project" value="MGI"/>
</dbReference>
<dbReference type="GO" id="GO:0048704">
    <property type="term" value="P:embryonic skeletal system morphogenesis"/>
    <property type="evidence" value="ECO:0000315"/>
    <property type="project" value="MGI"/>
</dbReference>
<dbReference type="GO" id="GO:0001958">
    <property type="term" value="P:endochondral ossification"/>
    <property type="evidence" value="ECO:0000315"/>
    <property type="project" value="MGI"/>
</dbReference>
<dbReference type="GO" id="GO:0030198">
    <property type="term" value="P:extracellular matrix organization"/>
    <property type="evidence" value="ECO:0000315"/>
    <property type="project" value="MGI"/>
</dbReference>
<dbReference type="GO" id="GO:0008104">
    <property type="term" value="P:protein localization"/>
    <property type="evidence" value="ECO:0000315"/>
    <property type="project" value="MGI"/>
</dbReference>
<dbReference type="GO" id="GO:0006898">
    <property type="term" value="P:receptor-mediated endocytosis"/>
    <property type="evidence" value="ECO:0000315"/>
    <property type="project" value="ARUK-UCL"/>
</dbReference>
<dbReference type="CDD" id="cd00054">
    <property type="entry name" value="EGF_CA"/>
    <property type="match status" value="2"/>
</dbReference>
<dbReference type="CDD" id="cd00055">
    <property type="entry name" value="EGF_Lam"/>
    <property type="match status" value="7"/>
</dbReference>
<dbReference type="CDD" id="cd00096">
    <property type="entry name" value="Ig"/>
    <property type="match status" value="5"/>
</dbReference>
<dbReference type="CDD" id="cd05743">
    <property type="entry name" value="Ig_Perlecan_like"/>
    <property type="match status" value="1"/>
</dbReference>
<dbReference type="CDD" id="cd05754">
    <property type="entry name" value="IgI_Perlecan_like"/>
    <property type="match status" value="1"/>
</dbReference>
<dbReference type="CDD" id="cd00110">
    <property type="entry name" value="LamG"/>
    <property type="match status" value="3"/>
</dbReference>
<dbReference type="CDD" id="cd00112">
    <property type="entry name" value="LDLa"/>
    <property type="match status" value="4"/>
</dbReference>
<dbReference type="FunFam" id="2.60.40.10:FF:004125">
    <property type="match status" value="1"/>
</dbReference>
<dbReference type="FunFam" id="2.10.25.10:FF:000307">
    <property type="entry name" value="Basement membrane-specific heparan sulfate proteoglycan core protein"/>
    <property type="match status" value="1"/>
</dbReference>
<dbReference type="FunFam" id="2.60.40.10:FF:000349">
    <property type="entry name" value="Basement membrane-specific heparan sulfate proteoglycan core protein"/>
    <property type="match status" value="1"/>
</dbReference>
<dbReference type="FunFam" id="2.60.40.10:FF:000602">
    <property type="entry name" value="Basement membrane-specific heparan sulfate proteoglycan core protein"/>
    <property type="match status" value="1"/>
</dbReference>
<dbReference type="FunFam" id="2.60.40.10:FF:000644">
    <property type="entry name" value="Basement membrane-specific heparan sulfate proteoglycan core protein"/>
    <property type="match status" value="1"/>
</dbReference>
<dbReference type="FunFam" id="2.60.40.10:FF:000700">
    <property type="entry name" value="Basement membrane-specific heparan sulfate proteoglycan core protein"/>
    <property type="match status" value="1"/>
</dbReference>
<dbReference type="FunFam" id="2.60.40.10:FF:000884">
    <property type="entry name" value="Basement membrane-specific heparan sulfate proteoglycan core protein"/>
    <property type="match status" value="1"/>
</dbReference>
<dbReference type="FunFam" id="2.60.40.10:FF:001022">
    <property type="entry name" value="Basement membrane-specific heparan sulfate proteoglycan core protein"/>
    <property type="match status" value="1"/>
</dbReference>
<dbReference type="FunFam" id="4.10.400.10:FF:000058">
    <property type="entry name" value="Basement membrane-specific heparan sulfate proteoglycan core protein"/>
    <property type="match status" value="1"/>
</dbReference>
<dbReference type="FunFam" id="4.10.400.10:FF:000093">
    <property type="entry name" value="Basement membrane-specific heparan sulfate proteoglycan core protein"/>
    <property type="match status" value="1"/>
</dbReference>
<dbReference type="FunFam" id="2.10.25.10:FF:000298">
    <property type="entry name" value="basement membrane-specific heparan sulfate proteoglycan core protein"/>
    <property type="match status" value="1"/>
</dbReference>
<dbReference type="FunFam" id="2.60.40.10:FF:000067">
    <property type="entry name" value="basement membrane-specific heparan sulfate proteoglycan core protein"/>
    <property type="match status" value="3"/>
</dbReference>
<dbReference type="FunFam" id="4.10.400.10:FF:000127">
    <property type="entry name" value="basement membrane-specific heparan sulfate proteoglycan core protein"/>
    <property type="match status" value="1"/>
</dbReference>
<dbReference type="FunFam" id="2.10.25.10:FF:000185">
    <property type="entry name" value="basement membrane-specific heparan sulfate proteoglycan core protein-like"/>
    <property type="match status" value="1"/>
</dbReference>
<dbReference type="FunFam" id="2.10.25.10:FF:000387">
    <property type="entry name" value="basement membrane-specific heparan sulfate proteoglycan core protein-like"/>
    <property type="match status" value="1"/>
</dbReference>
<dbReference type="FunFam" id="2.60.120.200:FF:000072">
    <property type="entry name" value="basement membrane-specific heparan sulfate proteoglycan core protein-like"/>
    <property type="match status" value="1"/>
</dbReference>
<dbReference type="FunFam" id="2.60.120.200:FF:000076">
    <property type="entry name" value="basement membrane-specific heparan sulfate proteoglycan core protein-like"/>
    <property type="match status" value="1"/>
</dbReference>
<dbReference type="FunFam" id="2.60.120.200:FF:000101">
    <property type="entry name" value="basement membrane-specific heparan sulfate proteoglycan core protein-like"/>
    <property type="match status" value="1"/>
</dbReference>
<dbReference type="FunFam" id="2.60.40.10:FF:000666">
    <property type="entry name" value="basement membrane-specific heparan sulfate proteoglycan core protein-like"/>
    <property type="match status" value="1"/>
</dbReference>
<dbReference type="FunFam" id="2.60.40.10:FF:000685">
    <property type="entry name" value="basement membrane-specific heparan sulfate proteoglycan core protein-like"/>
    <property type="match status" value="1"/>
</dbReference>
<dbReference type="FunFam" id="2.60.40.10:FF:000692">
    <property type="entry name" value="basement membrane-specific heparan sulfate proteoglycan core protein-like"/>
    <property type="match status" value="1"/>
</dbReference>
<dbReference type="FunFam" id="2.10.25.10:FF:000106">
    <property type="entry name" value="Heparan sulfate proteoglycan 2"/>
    <property type="match status" value="3"/>
</dbReference>
<dbReference type="FunFam" id="2.10.25.10:FF:000416">
    <property type="entry name" value="Heparan sulfate proteoglycan 2"/>
    <property type="match status" value="1"/>
</dbReference>
<dbReference type="FunFam" id="2.170.300.10:FF:000012">
    <property type="entry name" value="Heparan sulfate proteoglycan 2"/>
    <property type="match status" value="1"/>
</dbReference>
<dbReference type="FunFam" id="2.60.40.10:FF:000918">
    <property type="entry name" value="Heparan sulfate proteoglycan 2"/>
    <property type="match status" value="1"/>
</dbReference>
<dbReference type="FunFam" id="2.60.40.10:FF:001104">
    <property type="entry name" value="Heparan sulfate proteoglycan 2"/>
    <property type="match status" value="1"/>
</dbReference>
<dbReference type="FunFam" id="4.10.400.10:FF:000088">
    <property type="entry name" value="Heparan sulfate proteoglycan 2"/>
    <property type="match status" value="1"/>
</dbReference>
<dbReference type="FunFam" id="2.10.25.10:FF:000033">
    <property type="entry name" value="Laminin subunit alpha 2"/>
    <property type="match status" value="1"/>
</dbReference>
<dbReference type="FunFam" id="2.10.25.10:FF:000128">
    <property type="entry name" value="laminin subunit alpha-2 isoform X1"/>
    <property type="match status" value="1"/>
</dbReference>
<dbReference type="Gene3D" id="2.60.120.200">
    <property type="match status" value="3"/>
</dbReference>
<dbReference type="Gene3D" id="2.60.40.10">
    <property type="entry name" value="Immunoglobulins"/>
    <property type="match status" value="15"/>
</dbReference>
<dbReference type="Gene3D" id="2.10.25.10">
    <property type="entry name" value="Laminin"/>
    <property type="match status" value="10"/>
</dbReference>
<dbReference type="Gene3D" id="4.10.400.10">
    <property type="entry name" value="Low-density Lipoprotein Receptor"/>
    <property type="match status" value="4"/>
</dbReference>
<dbReference type="Gene3D" id="2.170.300.10">
    <property type="entry name" value="Tie2 ligand-binding domain superfamily"/>
    <property type="match status" value="1"/>
</dbReference>
<dbReference type="InterPro" id="IPR050958">
    <property type="entry name" value="Cell_Adh-Cytoskel_Orgn"/>
</dbReference>
<dbReference type="InterPro" id="IPR013320">
    <property type="entry name" value="ConA-like_dom_sf"/>
</dbReference>
<dbReference type="InterPro" id="IPR001881">
    <property type="entry name" value="EGF-like_Ca-bd_dom"/>
</dbReference>
<dbReference type="InterPro" id="IPR000742">
    <property type="entry name" value="EGF-like_dom"/>
</dbReference>
<dbReference type="InterPro" id="IPR007110">
    <property type="entry name" value="Ig-like_dom"/>
</dbReference>
<dbReference type="InterPro" id="IPR036179">
    <property type="entry name" value="Ig-like_dom_sf"/>
</dbReference>
<dbReference type="InterPro" id="IPR013783">
    <property type="entry name" value="Ig-like_fold"/>
</dbReference>
<dbReference type="InterPro" id="IPR013098">
    <property type="entry name" value="Ig_I-set"/>
</dbReference>
<dbReference type="InterPro" id="IPR003599">
    <property type="entry name" value="Ig_sub"/>
</dbReference>
<dbReference type="InterPro" id="IPR003598">
    <property type="entry name" value="Ig_sub2"/>
</dbReference>
<dbReference type="InterPro" id="IPR013106">
    <property type="entry name" value="Ig_V-set"/>
</dbReference>
<dbReference type="InterPro" id="IPR001791">
    <property type="entry name" value="Laminin_G"/>
</dbReference>
<dbReference type="InterPro" id="IPR000034">
    <property type="entry name" value="Laminin_IV"/>
</dbReference>
<dbReference type="InterPro" id="IPR036055">
    <property type="entry name" value="LDL_receptor-like_sf"/>
</dbReference>
<dbReference type="InterPro" id="IPR023415">
    <property type="entry name" value="LDLR_class-A_CS"/>
</dbReference>
<dbReference type="InterPro" id="IPR002172">
    <property type="entry name" value="LDrepeatLR_classA_rpt"/>
</dbReference>
<dbReference type="InterPro" id="IPR002049">
    <property type="entry name" value="LE_dom"/>
</dbReference>
<dbReference type="InterPro" id="IPR056863">
    <property type="entry name" value="LMN_ATRN_NET-like_EGF"/>
</dbReference>
<dbReference type="InterPro" id="IPR000082">
    <property type="entry name" value="SEA_dom"/>
</dbReference>
<dbReference type="PANTHER" id="PTHR45080">
    <property type="entry name" value="CONTACTIN 5"/>
    <property type="match status" value="1"/>
</dbReference>
<dbReference type="PANTHER" id="PTHR45080:SF8">
    <property type="entry name" value="IG-LIKE DOMAIN-CONTAINING PROTEIN"/>
    <property type="match status" value="1"/>
</dbReference>
<dbReference type="Pfam" id="PF00008">
    <property type="entry name" value="EGF"/>
    <property type="match status" value="2"/>
</dbReference>
<dbReference type="Pfam" id="PF00053">
    <property type="entry name" value="EGF_laminin"/>
    <property type="match status" value="6"/>
</dbReference>
<dbReference type="Pfam" id="PF24973">
    <property type="entry name" value="EGF_LMN_ATRN"/>
    <property type="match status" value="3"/>
</dbReference>
<dbReference type="Pfam" id="PF07679">
    <property type="entry name" value="I-set"/>
    <property type="match status" value="7"/>
</dbReference>
<dbReference type="Pfam" id="PF13927">
    <property type="entry name" value="Ig_3"/>
    <property type="match status" value="8"/>
</dbReference>
<dbReference type="Pfam" id="PF00052">
    <property type="entry name" value="Laminin_B"/>
    <property type="match status" value="3"/>
</dbReference>
<dbReference type="Pfam" id="PF00054">
    <property type="entry name" value="Laminin_G_1"/>
    <property type="match status" value="3"/>
</dbReference>
<dbReference type="Pfam" id="PF00057">
    <property type="entry name" value="Ldl_recept_a"/>
    <property type="match status" value="4"/>
</dbReference>
<dbReference type="PRINTS" id="PR00261">
    <property type="entry name" value="LDLRECEPTOR"/>
</dbReference>
<dbReference type="SMART" id="SM00181">
    <property type="entry name" value="EGF"/>
    <property type="match status" value="10"/>
</dbReference>
<dbReference type="SMART" id="SM00179">
    <property type="entry name" value="EGF_CA"/>
    <property type="match status" value="4"/>
</dbReference>
<dbReference type="SMART" id="SM00180">
    <property type="entry name" value="EGF_Lam"/>
    <property type="match status" value="9"/>
</dbReference>
<dbReference type="SMART" id="SM00409">
    <property type="entry name" value="IG"/>
    <property type="match status" value="15"/>
</dbReference>
<dbReference type="SMART" id="SM00408">
    <property type="entry name" value="IGc2"/>
    <property type="match status" value="14"/>
</dbReference>
<dbReference type="SMART" id="SM00406">
    <property type="entry name" value="IGv"/>
    <property type="match status" value="7"/>
</dbReference>
<dbReference type="SMART" id="SM00281">
    <property type="entry name" value="LamB"/>
    <property type="match status" value="3"/>
</dbReference>
<dbReference type="SMART" id="SM00282">
    <property type="entry name" value="LamG"/>
    <property type="match status" value="3"/>
</dbReference>
<dbReference type="SMART" id="SM00192">
    <property type="entry name" value="LDLa"/>
    <property type="match status" value="4"/>
</dbReference>
<dbReference type="SMART" id="SM00200">
    <property type="entry name" value="SEA"/>
    <property type="match status" value="1"/>
</dbReference>
<dbReference type="SUPFAM" id="SSF49899">
    <property type="entry name" value="Concanavalin A-like lectins/glucanases"/>
    <property type="match status" value="3"/>
</dbReference>
<dbReference type="SUPFAM" id="SSF57196">
    <property type="entry name" value="EGF/Laminin"/>
    <property type="match status" value="8"/>
</dbReference>
<dbReference type="SUPFAM" id="SSF48726">
    <property type="entry name" value="Immunoglobulin"/>
    <property type="match status" value="15"/>
</dbReference>
<dbReference type="SUPFAM" id="SSF57424">
    <property type="entry name" value="LDL receptor-like module"/>
    <property type="match status" value="4"/>
</dbReference>
<dbReference type="PROSITE" id="PS00022">
    <property type="entry name" value="EGF_1"/>
    <property type="match status" value="8"/>
</dbReference>
<dbReference type="PROSITE" id="PS01186">
    <property type="entry name" value="EGF_2"/>
    <property type="match status" value="5"/>
</dbReference>
<dbReference type="PROSITE" id="PS50026">
    <property type="entry name" value="EGF_3"/>
    <property type="match status" value="4"/>
</dbReference>
<dbReference type="PROSITE" id="PS01248">
    <property type="entry name" value="EGF_LAM_1"/>
    <property type="match status" value="11"/>
</dbReference>
<dbReference type="PROSITE" id="PS50027">
    <property type="entry name" value="EGF_LAM_2"/>
    <property type="match status" value="8"/>
</dbReference>
<dbReference type="PROSITE" id="PS50835">
    <property type="entry name" value="IG_LIKE"/>
    <property type="match status" value="15"/>
</dbReference>
<dbReference type="PROSITE" id="PS50025">
    <property type="entry name" value="LAM_G_DOMAIN"/>
    <property type="match status" value="3"/>
</dbReference>
<dbReference type="PROSITE" id="PS51115">
    <property type="entry name" value="LAMININ_IVA"/>
    <property type="match status" value="3"/>
</dbReference>
<dbReference type="PROSITE" id="PS01209">
    <property type="entry name" value="LDLRA_1"/>
    <property type="match status" value="4"/>
</dbReference>
<dbReference type="PROSITE" id="PS50068">
    <property type="entry name" value="LDLRA_2"/>
    <property type="match status" value="4"/>
</dbReference>
<dbReference type="PROSITE" id="PS50024">
    <property type="entry name" value="SEA"/>
    <property type="match status" value="1"/>
</dbReference>
<name>PGBM_MOUSE</name>
<feature type="signal peptide" evidence="3">
    <location>
        <begin position="1"/>
        <end position="21"/>
    </location>
</feature>
<feature type="chain" id="PRO_0000026697" description="Basement membrane-specific heparan sulfate proteoglycan core protein">
    <location>
        <begin position="22"/>
        <end position="3707"/>
    </location>
</feature>
<feature type="chain" id="PRO_0000391623" description="Endorepellin">
    <location>
        <begin position="3008"/>
        <end position="3707"/>
    </location>
</feature>
<feature type="chain" id="PRO_0000391624" description="LG3 peptide" evidence="1">
    <location>
        <begin position="3514"/>
        <end position="3707"/>
    </location>
</feature>
<feature type="domain" description="SEA" evidence="7">
    <location>
        <begin position="80"/>
        <end position="191"/>
    </location>
</feature>
<feature type="domain" description="LDL-receptor class A 1" evidence="6">
    <location>
        <begin position="195"/>
        <end position="234"/>
    </location>
</feature>
<feature type="domain" description="LDL-receptor class A 2" evidence="6">
    <location>
        <begin position="281"/>
        <end position="319"/>
    </location>
</feature>
<feature type="domain" description="LDL-receptor class A 3" evidence="6">
    <location>
        <begin position="320"/>
        <end position="359"/>
    </location>
</feature>
<feature type="domain" description="LDL-receptor class A 4" evidence="6">
    <location>
        <begin position="360"/>
        <end position="403"/>
    </location>
</feature>
<feature type="domain" description="Ig-like C2-type 1">
    <location>
        <begin position="404"/>
        <end position="504"/>
    </location>
</feature>
<feature type="domain" description="Laminin EGF-like 1; first part" evidence="9">
    <location>
        <begin position="521"/>
        <end position="530"/>
    </location>
</feature>
<feature type="domain" description="Laminin IV type A 1" evidence="8">
    <location>
        <begin position="538"/>
        <end position="730"/>
    </location>
</feature>
<feature type="domain" description="Laminin EGF-like 1; second part" evidence="9">
    <location>
        <begin position="731"/>
        <end position="763"/>
    </location>
</feature>
<feature type="domain" description="Laminin EGF-like 2" evidence="9">
    <location>
        <begin position="764"/>
        <end position="813"/>
    </location>
</feature>
<feature type="domain" description="Laminin EGF-like 3" evidence="9">
    <location>
        <begin position="814"/>
        <end position="871"/>
    </location>
</feature>
<feature type="domain" description="Laminin EGF-like 4; truncated" evidence="9">
    <location>
        <begin position="879"/>
        <end position="923"/>
    </location>
</feature>
<feature type="domain" description="Laminin EGF-like 5; first part" evidence="9">
    <location>
        <begin position="924"/>
        <end position="933"/>
    </location>
</feature>
<feature type="domain" description="Laminin IV type A 2" evidence="8">
    <location>
        <begin position="941"/>
        <end position="1125"/>
    </location>
</feature>
<feature type="domain" description="Laminin EGF-like 5; second part" evidence="9">
    <location>
        <begin position="1126"/>
        <end position="1158"/>
    </location>
</feature>
<feature type="domain" description="Laminin EGF-like 6" evidence="9">
    <location>
        <begin position="1159"/>
        <end position="1208"/>
    </location>
</feature>
<feature type="domain" description="Laminin EGF-like 7" evidence="9">
    <location>
        <begin position="1209"/>
        <end position="1265"/>
    </location>
</feature>
<feature type="domain" description="Laminin EGF-like 8" evidence="9">
    <location>
        <begin position="1275"/>
        <end position="1324"/>
    </location>
</feature>
<feature type="domain" description="Laminin EGF-like 9; first part" evidence="9">
    <location>
        <begin position="1325"/>
        <end position="1334"/>
    </location>
</feature>
<feature type="domain" description="Laminin IV type A 3" evidence="8">
    <location>
        <begin position="1344"/>
        <end position="1529"/>
    </location>
</feature>
<feature type="domain" description="Laminin EGF-like 9; second part" evidence="9">
    <location>
        <begin position="1530"/>
        <end position="1562"/>
    </location>
</feature>
<feature type="domain" description="Laminin EGF-like 10" evidence="9">
    <location>
        <begin position="1563"/>
        <end position="1612"/>
    </location>
</feature>
<feature type="domain" description="Laminin EGF-like 11" evidence="9">
    <location>
        <begin position="1613"/>
        <end position="1670"/>
    </location>
</feature>
<feature type="domain" description="Ig-like C2-type 2">
    <location>
        <begin position="1677"/>
        <end position="1771"/>
    </location>
</feature>
<feature type="domain" description="Ig-like C2-type 3">
    <location>
        <begin position="1772"/>
        <end position="1865"/>
    </location>
</feature>
<feature type="domain" description="Ig-like C2-type 4">
    <location>
        <begin position="1866"/>
        <end position="1954"/>
    </location>
</feature>
<feature type="domain" description="Ig-like C2-type 5">
    <location>
        <begin position="1955"/>
        <end position="2049"/>
    </location>
</feature>
<feature type="domain" description="Ig-like C2-type 6">
    <location>
        <begin position="2050"/>
        <end position="2148"/>
    </location>
</feature>
<feature type="domain" description="Ig-like C2-type 7">
    <location>
        <begin position="2149"/>
        <end position="2244"/>
    </location>
</feature>
<feature type="domain" description="Ig-like C2-type 8">
    <location>
        <begin position="2245"/>
        <end position="2343"/>
    </location>
</feature>
<feature type="domain" description="Ig-like C2-type 9">
    <location>
        <begin position="2344"/>
        <end position="2436"/>
    </location>
</feature>
<feature type="domain" description="Ig-like C2-type 10">
    <location>
        <begin position="2437"/>
        <end position="2532"/>
    </location>
</feature>
<feature type="domain" description="Ig-like C2-type 11">
    <location>
        <begin position="2533"/>
        <end position="2619"/>
    </location>
</feature>
<feature type="domain" description="Ig-like C2-type 12">
    <location>
        <begin position="2620"/>
        <end position="2720"/>
    </location>
</feature>
<feature type="domain" description="Ig-like C2-type 13">
    <location>
        <begin position="2721"/>
        <end position="2809"/>
    </location>
</feature>
<feature type="domain" description="Ig-like C2-type 14">
    <location>
        <begin position="2810"/>
        <end position="2895"/>
    </location>
</feature>
<feature type="domain" description="Ig-like C2-type 15">
    <location>
        <begin position="2896"/>
        <end position="2980"/>
    </location>
</feature>
<feature type="domain" description="Laminin G-like 1" evidence="5">
    <location>
        <begin position="2984"/>
        <end position="3162"/>
    </location>
</feature>
<feature type="domain" description="EGF-like" evidence="4">
    <location>
        <begin position="3163"/>
        <end position="3241"/>
    </location>
</feature>
<feature type="domain" description="Laminin G-like 2" evidence="5">
    <location>
        <begin position="3245"/>
        <end position="3425"/>
    </location>
</feature>
<feature type="domain" description="Laminin G-like 3" evidence="5">
    <location>
        <begin position="3518"/>
        <end position="3705"/>
    </location>
</feature>
<feature type="region of interest" description="Disordered" evidence="10">
    <location>
        <begin position="1713"/>
        <end position="1733"/>
    </location>
</feature>
<feature type="region of interest" description="Disordered" evidence="10">
    <location>
        <begin position="2039"/>
        <end position="2061"/>
    </location>
</feature>
<feature type="region of interest" description="Mediates motor neuron attachment" evidence="3">
    <location>
        <begin position="3615"/>
        <end position="3617"/>
    </location>
</feature>
<feature type="region of interest" description="Disordered" evidence="10">
    <location>
        <begin position="3680"/>
        <end position="3707"/>
    </location>
</feature>
<feature type="compositionally biased region" description="Low complexity" evidence="10">
    <location>
        <begin position="2052"/>
        <end position="2061"/>
    </location>
</feature>
<feature type="binding site" evidence="1">
    <location>
        <position position="3574"/>
    </location>
    <ligand>
        <name>Ca(2+)</name>
        <dbReference type="ChEBI" id="CHEBI:29108"/>
    </ligand>
</feature>
<feature type="binding site" evidence="1">
    <location>
        <position position="3591"/>
    </location>
    <ligand>
        <name>Ca(2+)</name>
        <dbReference type="ChEBI" id="CHEBI:29108"/>
    </ligand>
</feature>
<feature type="binding site" evidence="1">
    <location>
        <position position="3641"/>
    </location>
    <ligand>
        <name>Ca(2+)</name>
        <dbReference type="ChEBI" id="CHEBI:29108"/>
    </ligand>
</feature>
<feature type="binding site" evidence="1">
    <location>
        <position position="3643"/>
    </location>
    <ligand>
        <name>Ca(2+)</name>
        <dbReference type="ChEBI" id="CHEBI:29108"/>
    </ligand>
</feature>
<feature type="site" description="Cleavage; by BMP1" evidence="1">
    <location>
        <begin position="3513"/>
        <end position="3514"/>
    </location>
</feature>
<feature type="glycosylation site" description="O-linked (Xyl...) (heparan sulfate) serine" evidence="3">
    <location>
        <position position="65"/>
    </location>
</feature>
<feature type="glycosylation site" description="O-linked (Xyl...) (heparan sulfate) serine" evidence="3">
    <location>
        <position position="71"/>
    </location>
</feature>
<feature type="glycosylation site" description="O-linked (Xyl...) (heparan sulfate) serine" evidence="3">
    <location>
        <position position="76"/>
    </location>
</feature>
<feature type="glycosylation site" description="N-linked (GlcNAc...) asparagine" evidence="15">
    <location>
        <position position="89"/>
    </location>
</feature>
<feature type="glycosylation site" description="N-linked (GlcNAc...) asparagine" evidence="3">
    <location>
        <position position="358"/>
    </location>
</feature>
<feature type="glycosylation site" description="N-linked (GlcNAc...) asparagine" evidence="3">
    <location>
        <position position="554"/>
    </location>
</feature>
<feature type="glycosylation site" description="N-linked (GlcNAc...) asparagine" evidence="14 15">
    <location>
        <position position="2336"/>
    </location>
</feature>
<feature type="glycosylation site" description="N-linked (GlcNAc...) asparagine" evidence="3">
    <location>
        <position position="2394"/>
    </location>
</feature>
<feature type="glycosylation site" description="N-linked (GlcNAc...) asparagine" evidence="3">
    <location>
        <position position="2427"/>
    </location>
</feature>
<feature type="glycosylation site" description="N-linked (GlcNAc...) asparagine" evidence="3">
    <location>
        <position position="2600"/>
    </location>
</feature>
<feature type="glycosylation site" description="N-linked (GlcNAc...) asparagine" evidence="14 15">
    <location>
        <position position="3098"/>
    </location>
</feature>
<feature type="glycosylation site" description="N-linked (GlcNAc...) asparagine" evidence="15">
    <location>
        <position position="3154"/>
    </location>
</feature>
<feature type="glycosylation site" description="N-linked (GlcNAc...) asparagine" evidence="3">
    <location>
        <position position="3385"/>
    </location>
</feature>
<feature type="glycosylation site" description="O-linked (Xyl...) (chondroitin sulfate) serine" evidence="2">
    <location>
        <position position="3510"/>
    </location>
</feature>
<feature type="disulfide bond" evidence="1">
    <location>
        <begin position="199"/>
        <end position="212"/>
    </location>
</feature>
<feature type="disulfide bond" evidence="1">
    <location>
        <begin position="206"/>
        <end position="225"/>
    </location>
</feature>
<feature type="disulfide bond" evidence="1">
    <location>
        <begin position="219"/>
        <end position="234"/>
    </location>
</feature>
<feature type="disulfide bond" evidence="1">
    <location>
        <begin position="285"/>
        <end position="297"/>
    </location>
</feature>
<feature type="disulfide bond" evidence="1">
    <location>
        <begin position="292"/>
        <end position="310"/>
    </location>
</feature>
<feature type="disulfide bond" evidence="1">
    <location>
        <begin position="304"/>
        <end position="319"/>
    </location>
</feature>
<feature type="disulfide bond" evidence="1">
    <location>
        <begin position="325"/>
        <end position="337"/>
    </location>
</feature>
<feature type="disulfide bond" evidence="1">
    <location>
        <begin position="332"/>
        <end position="350"/>
    </location>
</feature>
<feature type="disulfide bond" evidence="1">
    <location>
        <begin position="344"/>
        <end position="359"/>
    </location>
</feature>
<feature type="disulfide bond" evidence="1">
    <location>
        <begin position="368"/>
        <end position="381"/>
    </location>
</feature>
<feature type="disulfide bond" evidence="1">
    <location>
        <begin position="375"/>
        <end position="394"/>
    </location>
</feature>
<feature type="disulfide bond" evidence="1">
    <location>
        <begin position="388"/>
        <end position="403"/>
    </location>
</feature>
<feature type="disulfide bond" evidence="1">
    <location>
        <begin position="428"/>
        <end position="479"/>
    </location>
</feature>
<feature type="disulfide bond" evidence="1">
    <location>
        <begin position="764"/>
        <end position="773"/>
    </location>
</feature>
<feature type="disulfide bond" evidence="1">
    <location>
        <begin position="766"/>
        <end position="780"/>
    </location>
</feature>
<feature type="disulfide bond" evidence="1">
    <location>
        <begin position="783"/>
        <end position="792"/>
    </location>
</feature>
<feature type="disulfide bond" evidence="1">
    <location>
        <begin position="795"/>
        <end position="811"/>
    </location>
</feature>
<feature type="disulfide bond" evidence="1">
    <location>
        <begin position="814"/>
        <end position="829"/>
    </location>
</feature>
<feature type="disulfide bond" evidence="1">
    <location>
        <begin position="816"/>
        <end position="839"/>
    </location>
</feature>
<feature type="disulfide bond" evidence="1">
    <location>
        <begin position="842"/>
        <end position="851"/>
    </location>
</feature>
<feature type="disulfide bond" evidence="1">
    <location>
        <begin position="854"/>
        <end position="869"/>
    </location>
</feature>
<feature type="disulfide bond" evidence="1">
    <location>
        <begin position="879"/>
        <end position="892"/>
    </location>
</feature>
<feature type="disulfide bond" evidence="1">
    <location>
        <begin position="894"/>
        <end position="903"/>
    </location>
</feature>
<feature type="disulfide bond" evidence="1">
    <location>
        <begin position="906"/>
        <end position="921"/>
    </location>
</feature>
<feature type="disulfide bond" evidence="1">
    <location>
        <begin position="1159"/>
        <end position="1168"/>
    </location>
</feature>
<feature type="disulfide bond" evidence="1">
    <location>
        <begin position="1161"/>
        <end position="1175"/>
    </location>
</feature>
<feature type="disulfide bond" evidence="1">
    <location>
        <begin position="1178"/>
        <end position="1187"/>
    </location>
</feature>
<feature type="disulfide bond" evidence="1">
    <location>
        <begin position="1190"/>
        <end position="1206"/>
    </location>
</feature>
<feature type="disulfide bond" evidence="1">
    <location>
        <begin position="1209"/>
        <end position="1224"/>
    </location>
</feature>
<feature type="disulfide bond" evidence="1">
    <location>
        <begin position="1211"/>
        <end position="1234"/>
    </location>
</feature>
<feature type="disulfide bond" evidence="1">
    <location>
        <begin position="1237"/>
        <end position="1246"/>
    </location>
</feature>
<feature type="disulfide bond" evidence="1">
    <location>
        <begin position="1249"/>
        <end position="1263"/>
    </location>
</feature>
<feature type="disulfide bond" evidence="1">
    <location>
        <begin position="1275"/>
        <end position="1287"/>
    </location>
</feature>
<feature type="disulfide bond" evidence="1">
    <location>
        <begin position="1277"/>
        <end position="1293"/>
    </location>
</feature>
<feature type="disulfide bond" evidence="1">
    <location>
        <begin position="1295"/>
        <end position="1304"/>
    </location>
</feature>
<feature type="disulfide bond" evidence="1">
    <location>
        <begin position="1307"/>
        <end position="1322"/>
    </location>
</feature>
<feature type="disulfide bond" evidence="1">
    <location>
        <begin position="1563"/>
        <end position="1572"/>
    </location>
</feature>
<feature type="disulfide bond" evidence="1">
    <location>
        <begin position="1565"/>
        <end position="1579"/>
    </location>
</feature>
<feature type="disulfide bond" evidence="1">
    <location>
        <begin position="1582"/>
        <end position="1591"/>
    </location>
</feature>
<feature type="disulfide bond" evidence="1">
    <location>
        <begin position="1594"/>
        <end position="1610"/>
    </location>
</feature>
<feature type="disulfide bond" evidence="1">
    <location>
        <begin position="1613"/>
        <end position="1628"/>
    </location>
</feature>
<feature type="disulfide bond" evidence="1">
    <location>
        <begin position="1615"/>
        <end position="1638"/>
    </location>
</feature>
<feature type="disulfide bond" evidence="1">
    <location>
        <begin position="1641"/>
        <end position="1650"/>
    </location>
</feature>
<feature type="disulfide bond" evidence="1">
    <location>
        <begin position="1653"/>
        <end position="1668"/>
    </location>
</feature>
<feature type="disulfide bond">
    <location>
        <begin position="1792"/>
        <end position="1839"/>
    </location>
</feature>
<feature type="disulfide bond" evidence="1">
    <location>
        <begin position="1886"/>
        <end position="1932"/>
    </location>
</feature>
<feature type="disulfide bond" evidence="1">
    <location>
        <begin position="1976"/>
        <end position="2021"/>
    </location>
</feature>
<feature type="disulfide bond" evidence="1">
    <location>
        <begin position="2073"/>
        <end position="2118"/>
    </location>
</feature>
<feature type="disulfide bond" evidence="1">
    <location>
        <begin position="2170"/>
        <end position="2215"/>
    </location>
</feature>
<feature type="disulfide bond" evidence="1">
    <location>
        <begin position="2268"/>
        <end position="2313"/>
    </location>
</feature>
<feature type="disulfide bond" evidence="1">
    <location>
        <begin position="2365"/>
        <end position="2413"/>
    </location>
</feature>
<feature type="disulfide bond" evidence="1">
    <location>
        <begin position="2456"/>
        <end position="2506"/>
    </location>
</feature>
<feature type="disulfide bond" evidence="1">
    <location>
        <begin position="2554"/>
        <end position="2599"/>
    </location>
</feature>
<feature type="disulfide bond" evidence="1">
    <location>
        <begin position="2641"/>
        <end position="2686"/>
    </location>
</feature>
<feature type="disulfide bond" evidence="1">
    <location>
        <begin position="2831"/>
        <end position="2876"/>
    </location>
</feature>
<feature type="disulfide bond" evidence="1">
    <location>
        <begin position="2917"/>
        <end position="2962"/>
    </location>
</feature>
<feature type="disulfide bond" evidence="1">
    <location>
        <begin position="3137"/>
        <end position="3163"/>
    </location>
</feature>
<feature type="disulfide bond" evidence="1">
    <location>
        <begin position="3166"/>
        <end position="3177"/>
    </location>
</feature>
<feature type="disulfide bond" evidence="1">
    <location>
        <begin position="3171"/>
        <end position="3187"/>
    </location>
</feature>
<feature type="disulfide bond" evidence="1">
    <location>
        <begin position="3204"/>
        <end position="3216"/>
    </location>
</feature>
<feature type="disulfide bond" evidence="1">
    <location>
        <begin position="3229"/>
        <end position="3238"/>
    </location>
</feature>
<feature type="disulfide bond" evidence="1">
    <location>
        <begin position="3393"/>
        <end position="3419"/>
    </location>
</feature>
<feature type="disulfide bond" evidence="1">
    <location>
        <begin position="3425"/>
        <end position="3436"/>
    </location>
</feature>
<feature type="disulfide bond" evidence="1">
    <location>
        <begin position="3430"/>
        <end position="3446"/>
    </location>
</feature>
<feature type="disulfide bond" evidence="1">
    <location>
        <begin position="3448"/>
        <end position="3457"/>
    </location>
</feature>
<feature type="disulfide bond" evidence="1">
    <location>
        <begin position="3464"/>
        <end position="3476"/>
    </location>
</feature>
<feature type="disulfide bond" evidence="1">
    <location>
        <begin position="3470"/>
        <end position="3481"/>
    </location>
</feature>
<feature type="disulfide bond" evidence="1">
    <location>
        <begin position="3483"/>
        <end position="3492"/>
    </location>
</feature>
<feature type="disulfide bond" evidence="1">
    <location>
        <begin position="3671"/>
        <end position="3705"/>
    </location>
</feature>
<feature type="sequence conflict" description="In Ref. 2; AA sequence." evidence="17" ref="2">
    <original>P</original>
    <variation>T</variation>
    <location>
        <position position="1192"/>
    </location>
</feature>
<feature type="sequence conflict" description="In Ref. 2; AA sequence." evidence="17" ref="2">
    <original>D</original>
    <variation>L</variation>
    <location>
        <position position="1227"/>
    </location>
</feature>
<feature type="strand" evidence="18">
    <location>
        <begin position="1770"/>
        <end position="1774"/>
    </location>
</feature>
<feature type="strand" evidence="18">
    <location>
        <begin position="1779"/>
        <end position="1782"/>
    </location>
</feature>
<feature type="strand" evidence="18">
    <location>
        <begin position="1788"/>
        <end position="1799"/>
    </location>
</feature>
<feature type="strand" evidence="18">
    <location>
        <begin position="1802"/>
        <end position="1807"/>
    </location>
</feature>
<feature type="helix" evidence="18">
    <location>
        <begin position="1808"/>
        <end position="1810"/>
    </location>
</feature>
<feature type="strand" evidence="18">
    <location>
        <begin position="1817"/>
        <end position="1820"/>
    </location>
</feature>
<feature type="strand" evidence="18">
    <location>
        <begin position="1823"/>
        <end position="1826"/>
    </location>
</feature>
<feature type="helix" evidence="18">
    <location>
        <begin position="1831"/>
        <end position="1833"/>
    </location>
</feature>
<feature type="strand" evidence="18">
    <location>
        <begin position="1835"/>
        <end position="1842"/>
    </location>
</feature>
<feature type="strand" evidence="18">
    <location>
        <begin position="1847"/>
        <end position="1856"/>
    </location>
</feature>